<sequence length="99" mass="10966">MTSTMTQGLERIPDQMGYLVMSEDGGVLASAGDLENDERLAGVIREMVAVACSFRDLGDQQPFKRMSIVFGEHTFLVTISGQKIYVVKRQNVVREPISV</sequence>
<gene>
    <name type="primary">lamtor4</name>
</gene>
<comment type="function">
    <text evidence="1">As part of the Ragulator complex it is involved in amino acid sensing and activation of mTORC1, a signaling complex promoting cell growth in response to growth factors, energy levels, and amino acids. Activated by amino acids through a mechanism involving the lysosomal V-ATPase, the Ragulator plays a dual role for the small GTPases Rag (RagA/RRAGA, RagB/RRAGB, RagC/RRAGC and/or RagD/RRAGD): it (1) acts as a guanine nucleotide exchange factor (GEF), activating the small GTPases Rag and (2) mediates recruitment of Rag GTPases to the lysosome membrane. Activated Ragulator and Rag GTPases function as a scaffold recruiting mTORC1 to lysosomes where it is in turn activated.</text>
</comment>
<comment type="subunit">
    <text evidence="1">Part of the Ragulator complex composed of lamtor1, lamtor2, lamtor3, lamtor4 and lamtor5. The Ragulator complex interacts with slc38a9; the probable amino acid sensor. Component of the lysosomal folliculin complex (LFC).</text>
</comment>
<comment type="subcellular location">
    <subcellularLocation>
        <location evidence="1">Lysosome</location>
    </subcellularLocation>
</comment>
<comment type="similarity">
    <text evidence="2">Belongs to the LAMTOR4 family.</text>
</comment>
<keyword id="KW-0458">Lysosome</keyword>
<keyword id="KW-0597">Phosphoprotein</keyword>
<keyword id="KW-1185">Reference proteome</keyword>
<accession>A9UMU8</accession>
<accession>B7ZUJ2</accession>
<protein>
    <recommendedName>
        <fullName>Ragulator complex protein LAMTOR4</fullName>
    </recommendedName>
    <alternativeName>
        <fullName>Late endosomal/lysosomal adaptor and MAPK and MTOR activator 4</fullName>
    </alternativeName>
</protein>
<feature type="chain" id="PRO_0000325845" description="Ragulator complex protein LAMTOR4">
    <location>
        <begin position="1"/>
        <end position="99"/>
    </location>
</feature>
<dbReference type="EMBL" id="BC157803">
    <property type="protein sequence ID" value="AAI57804.1"/>
    <property type="molecule type" value="mRNA"/>
</dbReference>
<dbReference type="EMBL" id="BC171250">
    <property type="protein sequence ID" value="AAI71250.1"/>
    <property type="molecule type" value="mRNA"/>
</dbReference>
<dbReference type="EMBL" id="BC171276">
    <property type="protein sequence ID" value="AAI71276.1"/>
    <property type="molecule type" value="mRNA"/>
</dbReference>
<dbReference type="RefSeq" id="NP_001107543.1">
    <property type="nucleotide sequence ID" value="NM_001114071.1"/>
</dbReference>
<dbReference type="SMR" id="A9UMU8"/>
<dbReference type="FunCoup" id="A9UMU8">
    <property type="interactions" value="1339"/>
</dbReference>
<dbReference type="GeneID" id="100135410"/>
<dbReference type="KEGG" id="xtr:100135410"/>
<dbReference type="CTD" id="389541"/>
<dbReference type="Xenbase" id="XB-GENE-6454976">
    <property type="gene designation" value="lamtor4"/>
</dbReference>
<dbReference type="InParanoid" id="A9UMU8"/>
<dbReference type="OMA" id="DESFMPN"/>
<dbReference type="OrthoDB" id="275011at2759"/>
<dbReference type="Reactome" id="R-XTR-1632852">
    <property type="pathway name" value="Macroautophagy"/>
</dbReference>
<dbReference type="Reactome" id="R-XTR-165159">
    <property type="pathway name" value="MTOR signalling"/>
</dbReference>
<dbReference type="Reactome" id="R-XTR-380972">
    <property type="pathway name" value="Energy dependent regulation of mTOR by LKB1-AMPK"/>
</dbReference>
<dbReference type="Reactome" id="R-XTR-5628897">
    <property type="pathway name" value="TP53 Regulates Metabolic Genes"/>
</dbReference>
<dbReference type="Reactome" id="R-XTR-9639288">
    <property type="pathway name" value="Amino acids regulate mTORC1"/>
</dbReference>
<dbReference type="Proteomes" id="UP000008143">
    <property type="component" value="Chromosome 3"/>
</dbReference>
<dbReference type="GO" id="GO:0005765">
    <property type="term" value="C:lysosomal membrane"/>
    <property type="evidence" value="ECO:0000250"/>
    <property type="project" value="UniProtKB"/>
</dbReference>
<dbReference type="GO" id="GO:0005764">
    <property type="term" value="C:lysosome"/>
    <property type="evidence" value="ECO:0000250"/>
    <property type="project" value="UniProtKB"/>
</dbReference>
<dbReference type="GO" id="GO:0071986">
    <property type="term" value="C:Ragulator complex"/>
    <property type="evidence" value="ECO:0000250"/>
    <property type="project" value="UniProtKB"/>
</dbReference>
<dbReference type="GO" id="GO:0071230">
    <property type="term" value="P:cellular response to amino acid stimulus"/>
    <property type="evidence" value="ECO:0000250"/>
    <property type="project" value="UniProtKB"/>
</dbReference>
<dbReference type="GO" id="GO:0032008">
    <property type="term" value="P:positive regulation of TOR signaling"/>
    <property type="evidence" value="ECO:0000250"/>
    <property type="project" value="UniProtKB"/>
</dbReference>
<dbReference type="GO" id="GO:1904263">
    <property type="term" value="P:positive regulation of TORC1 signaling"/>
    <property type="evidence" value="ECO:0000250"/>
    <property type="project" value="UniProtKB"/>
</dbReference>
<dbReference type="GO" id="GO:0061462">
    <property type="term" value="P:protein localization to lysosome"/>
    <property type="evidence" value="ECO:0000250"/>
    <property type="project" value="UniProtKB"/>
</dbReference>
<dbReference type="GO" id="GO:0008361">
    <property type="term" value="P:regulation of cell size"/>
    <property type="evidence" value="ECO:0000250"/>
    <property type="project" value="UniProtKB"/>
</dbReference>
<dbReference type="Gene3D" id="3.30.450.30">
    <property type="entry name" value="Dynein light chain 2a, cytoplasmic"/>
    <property type="match status" value="1"/>
</dbReference>
<dbReference type="InterPro" id="IPR034601">
    <property type="entry name" value="LAMTOR4"/>
</dbReference>
<dbReference type="PANTHER" id="PTHR33967">
    <property type="entry name" value="RAGULATOR COMPLEX PROTEIN LAMTOR4"/>
    <property type="match status" value="1"/>
</dbReference>
<dbReference type="PANTHER" id="PTHR33967:SF1">
    <property type="entry name" value="RAGULATOR COMPLEX PROTEIN LAMTOR4"/>
    <property type="match status" value="1"/>
</dbReference>
<dbReference type="SUPFAM" id="SSF103196">
    <property type="entry name" value="Roadblock/LC7 domain"/>
    <property type="match status" value="1"/>
</dbReference>
<name>LTOR4_XENTR</name>
<reference key="1">
    <citation type="submission" date="2008-11" db="EMBL/GenBank/DDBJ databases">
        <authorList>
            <consortium name="NIH - Xenopus Gene Collection (XGC) project"/>
        </authorList>
    </citation>
    <scope>NUCLEOTIDE SEQUENCE [LARGE SCALE MRNA]</scope>
    <source>
        <tissue>Neurula</tissue>
        <tissue>Small intestine</tissue>
    </source>
</reference>
<evidence type="ECO:0000250" key="1">
    <source>
        <dbReference type="UniProtKB" id="Q0VGL1"/>
    </source>
</evidence>
<evidence type="ECO:0000305" key="2"/>
<organism>
    <name type="scientific">Xenopus tropicalis</name>
    <name type="common">Western clawed frog</name>
    <name type="synonym">Silurana tropicalis</name>
    <dbReference type="NCBI Taxonomy" id="8364"/>
    <lineage>
        <taxon>Eukaryota</taxon>
        <taxon>Metazoa</taxon>
        <taxon>Chordata</taxon>
        <taxon>Craniata</taxon>
        <taxon>Vertebrata</taxon>
        <taxon>Euteleostomi</taxon>
        <taxon>Amphibia</taxon>
        <taxon>Batrachia</taxon>
        <taxon>Anura</taxon>
        <taxon>Pipoidea</taxon>
        <taxon>Pipidae</taxon>
        <taxon>Xenopodinae</taxon>
        <taxon>Xenopus</taxon>
        <taxon>Silurana</taxon>
    </lineage>
</organism>
<proteinExistence type="inferred from homology"/>